<sequence length="129" mass="14503">MRSSSPSQPPSIKRAHRQAKKRAIRRRRVDLQCGCSIYFHLGCAGHGFTHRGTHHCTSGGEWRVYLGARKSPLFQDTQSRGPTVYQNEGIPRTDTVQPQPEESVASPQSLPELPSLDDVDDSFWINLFS</sequence>
<dbReference type="EMBL" id="L14460">
    <property type="protein sequence ID" value="AAC32417.1"/>
    <property type="molecule type" value="Genomic_DNA"/>
</dbReference>
<dbReference type="PIR" id="JQ1871">
    <property type="entry name" value="JQ1871"/>
</dbReference>
<dbReference type="RefSeq" id="NP_047252.1">
    <property type="nucleotide sequence ID" value="NC_001938.1"/>
</dbReference>
<dbReference type="iPTMnet" id="Q06658"/>
<dbReference type="GeneID" id="956412"/>
<dbReference type="KEGG" id="vg:956412"/>
<dbReference type="Proteomes" id="UP000008249">
    <property type="component" value="Genome"/>
</dbReference>
<dbReference type="GO" id="GO:0030430">
    <property type="term" value="C:host cell cytoplasm"/>
    <property type="evidence" value="ECO:0007669"/>
    <property type="project" value="UniProtKB-SubCell"/>
</dbReference>
<dbReference type="GO" id="GO:0042025">
    <property type="term" value="C:host cell nucleus"/>
    <property type="evidence" value="ECO:0007669"/>
    <property type="project" value="UniProtKB-SubCell"/>
</dbReference>
<dbReference type="GO" id="GO:0019028">
    <property type="term" value="C:viral capsid"/>
    <property type="evidence" value="ECO:0007669"/>
    <property type="project" value="InterPro"/>
</dbReference>
<dbReference type="GO" id="GO:0003677">
    <property type="term" value="F:DNA binding"/>
    <property type="evidence" value="ECO:0007669"/>
    <property type="project" value="UniProtKB-KW"/>
</dbReference>
<dbReference type="GO" id="GO:0005198">
    <property type="term" value="F:structural molecule activity"/>
    <property type="evidence" value="ECO:0007669"/>
    <property type="project" value="InterPro"/>
</dbReference>
<dbReference type="GO" id="GO:0008270">
    <property type="term" value="F:zinc ion binding"/>
    <property type="evidence" value="ECO:0007669"/>
    <property type="project" value="UniProtKB-KW"/>
</dbReference>
<dbReference type="GO" id="GO:0052170">
    <property type="term" value="P:symbiont-mediated suppression of host innate immune response"/>
    <property type="evidence" value="ECO:0007669"/>
    <property type="project" value="UniProtKB-KW"/>
</dbReference>
<dbReference type="InterPro" id="IPR000942">
    <property type="entry name" value="Gemini_AL2"/>
</dbReference>
<dbReference type="Pfam" id="PF01440">
    <property type="entry name" value="Gemini_AL2"/>
    <property type="match status" value="1"/>
</dbReference>
<dbReference type="PRINTS" id="PR00230">
    <property type="entry name" value="GEMCOATAL2"/>
</dbReference>
<evidence type="ECO:0000250" key="1"/>
<evidence type="ECO:0000256" key="2">
    <source>
        <dbReference type="SAM" id="MobiDB-lite"/>
    </source>
</evidence>
<evidence type="ECO:0000269" key="3">
    <source>
    </source>
</evidence>
<evidence type="ECO:0000305" key="4"/>
<keyword id="KW-0010">Activator</keyword>
<keyword id="KW-0238">DNA-binding</keyword>
<keyword id="KW-1035">Host cytoplasm</keyword>
<keyword id="KW-1048">Host nucleus</keyword>
<keyword id="KW-0945">Host-virus interaction</keyword>
<keyword id="KW-1090">Inhibition of host innate immune response by virus</keyword>
<keyword id="KW-0479">Metal-binding</keyword>
<keyword id="KW-0597">Phosphoprotein</keyword>
<keyword id="KW-0941">Suppressor of RNA silencing</keyword>
<keyword id="KW-0899">Viral immunoevasion</keyword>
<keyword id="KW-0862">Zinc</keyword>
<keyword id="KW-0863">Zinc-finger</keyword>
<name>TRAP_TMOV</name>
<organismHost>
    <name type="scientific">Nicotiana tabacum</name>
    <name type="common">Common tobacco</name>
    <dbReference type="NCBI Taxonomy" id="4097"/>
</organismHost>
<gene>
    <name type="ORF">AC2</name>
    <name type="ORF">AL2</name>
</gene>
<feature type="chain" id="PRO_0000222231" description="Transcriptional activator protein">
    <location>
        <begin position="1"/>
        <end position="129"/>
    </location>
</feature>
<feature type="zinc finger region" evidence="1">
    <location>
        <begin position="33"/>
        <end position="50"/>
    </location>
</feature>
<feature type="region of interest" description="Disordered" evidence="2">
    <location>
        <begin position="1"/>
        <end position="20"/>
    </location>
</feature>
<feature type="region of interest" description="Disordered" evidence="2">
    <location>
        <begin position="73"/>
        <end position="118"/>
    </location>
</feature>
<feature type="region of interest" description="Transactivation" evidence="1">
    <location>
        <begin position="115"/>
        <end position="129"/>
    </location>
</feature>
<feature type="short sequence motif" description="Nuclear localization signal" evidence="1">
    <location>
        <begin position="13"/>
        <end position="28"/>
    </location>
</feature>
<feature type="compositionally biased region" description="Polar residues" evidence="2">
    <location>
        <begin position="74"/>
        <end position="86"/>
    </location>
</feature>
<feature type="compositionally biased region" description="Polar residues" evidence="2">
    <location>
        <begin position="94"/>
        <end position="109"/>
    </location>
</feature>
<feature type="modified residue" description="Phosphoserine; by host" evidence="3">
    <location>
        <position position="109"/>
    </location>
</feature>
<feature type="mutagenesis site" description="Strongly reduces phosphorylation." evidence="3">
    <original>S</original>
    <variation>A</variation>
    <location>
        <position position="109"/>
    </location>
</feature>
<proteinExistence type="evidence at protein level"/>
<protein>
    <recommendedName>
        <fullName>Transcriptional activator protein</fullName>
        <shortName>TrAP</shortName>
    </recommendedName>
    <alternativeName>
        <fullName>Protein AC2</fullName>
    </alternativeName>
    <alternativeName>
        <fullName>Protein AL2</fullName>
    </alternativeName>
</protein>
<comment type="function">
    <text evidence="1">Strong activator of the late viral genes promoters. Enhances the expression of the capsid protein and nuclear shuttle protein. Acts as a suppressor of RNA-mediated gene silencing, also known as post-transcriptional gene silencing (PTGS), a mechanism of plant viral defense that limits the accumulation of viral RNAs. Suppresses the host RNA silencing by inhibiting adenosine kinase 2 (ADK2), a kinase involved in a general methylation pathway. Also suppresses the host basal defense by interacting with and inhibiting SNF1 kinase, a key regulator of cell metabolism implicated in innate antiviral defense. Determines pathogenicity (By similarity).</text>
</comment>
<comment type="subunit">
    <text evidence="1">Monomer. Homodimer. Homooligomer. Self-interaction correlates with nuclear localization and efficient activation of transcription. Monomers suppress local silencing by interacting with and inactivating host adenosine kinase 2 (ADK2) in the cytoplasm. Interacts with and inhibits host SNF1 kinase (By similarity).</text>
</comment>
<comment type="subcellular location">
    <subcellularLocation>
        <location evidence="1">Host nucleus</location>
    </subcellularLocation>
    <subcellularLocation>
        <location evidence="1">Host cytoplasm</location>
    </subcellularLocation>
    <text evidence="1">The phosphorylated form appears to accumulate almost exclusively in the nucleus, whereas the non-phosphorylated form is found in both nucleus and cytoplasm.</text>
</comment>
<comment type="domain">
    <text evidence="1">The zinc finger and the transactivation region are involved in PTGS suppression.</text>
</comment>
<comment type="PTM">
    <text evidence="3">Phosphorylated at Ser-109 by A.thaliana KIN10.</text>
</comment>
<comment type="similarity">
    <text evidence="4">Belongs to the geminiviridae transcriptional activator protein family.</text>
</comment>
<organism>
    <name type="scientific">Tomato mottle virus (isolate Florida)</name>
    <name type="common">ToMoV</name>
    <dbReference type="NCBI Taxonomy" id="223359"/>
    <lineage>
        <taxon>Viruses</taxon>
        <taxon>Monodnaviria</taxon>
        <taxon>Shotokuvirae</taxon>
        <taxon>Cressdnaviricota</taxon>
        <taxon>Repensiviricetes</taxon>
        <taxon>Geplafuvirales</taxon>
        <taxon>Geminiviridae</taxon>
        <taxon>Begomovirus</taxon>
        <taxon>Tomato mottle virus</taxon>
    </lineage>
</organism>
<reference key="1">
    <citation type="journal article" date="1992" name="J. Gen. Virol.">
        <title>The nucleotide sequence of tomato mottle virus, a new geminivirus isolated from tomatoes in Florida.</title>
        <authorList>
            <person name="Abouzid A.M."/>
            <person name="Polston J.E."/>
            <person name="Hiebert E."/>
        </authorList>
    </citation>
    <scope>NUCLEOTIDE SEQUENCE [GENOMIC DNA]</scope>
</reference>
<reference key="2">
    <citation type="journal article" date="2014" name="J. Virol.">
        <title>SnRK1 phosphorylation of AL2 delays Cabbage leaf curl virus infection in Arabidopsis.</title>
        <authorList>
            <person name="Shen W."/>
            <person name="Dallas M.B."/>
            <person name="Goshe M.B."/>
            <person name="Hanley-Bowdoin L."/>
        </authorList>
    </citation>
    <scope>PHOSPHORYLATION AT SER-109</scope>
    <scope>MUTAGENESIS OF SER-109</scope>
</reference>
<accession>Q06658</accession>